<sequence length="105" mass="12235">MAEWNGEYVSPYAEHGKKSEQVKKITVSIPLKVLRILTDERTRRQVNNLRHATNSELLCEAFLHAFTGQPLPDDADLRKERNDEIPEEAKKIMRELGIDPDTWEY</sequence>
<evidence type="ECO:0000255" key="1">
    <source>
        <dbReference type="HAMAP-Rule" id="MF_00744"/>
    </source>
</evidence>
<comment type="function">
    <text evidence="1">This regulatory protein, when combined with SAM (S-adenosylmethionine) represses the expression of the methionine regulon and of enzymes involved in SAM synthesis.</text>
</comment>
<comment type="subunit">
    <text evidence="1">Homodimer.</text>
</comment>
<comment type="subcellular location">
    <subcellularLocation>
        <location evidence="1">Cytoplasm</location>
    </subcellularLocation>
</comment>
<comment type="domain">
    <text>Does not bind DNA by a helix-turn-helix motif.</text>
</comment>
<comment type="similarity">
    <text evidence="1">Belongs to the MetJ family.</text>
</comment>
<gene>
    <name evidence="1" type="primary">metJ</name>
    <name type="ordered locus">plu4757</name>
</gene>
<reference key="1">
    <citation type="journal article" date="2003" name="Nat. Biotechnol.">
        <title>The genome sequence of the entomopathogenic bacterium Photorhabdus luminescens.</title>
        <authorList>
            <person name="Duchaud E."/>
            <person name="Rusniok C."/>
            <person name="Frangeul L."/>
            <person name="Buchrieser C."/>
            <person name="Givaudan A."/>
            <person name="Taourit S."/>
            <person name="Bocs S."/>
            <person name="Boursaux-Eude C."/>
            <person name="Chandler M."/>
            <person name="Charles J.-F."/>
            <person name="Dassa E."/>
            <person name="Derose R."/>
            <person name="Derzelle S."/>
            <person name="Freyssinet G."/>
            <person name="Gaudriault S."/>
            <person name="Medigue C."/>
            <person name="Lanois A."/>
            <person name="Powell K."/>
            <person name="Siguier P."/>
            <person name="Vincent R."/>
            <person name="Wingate V."/>
            <person name="Zouine M."/>
            <person name="Glaser P."/>
            <person name="Boemare N."/>
            <person name="Danchin A."/>
            <person name="Kunst F."/>
        </authorList>
    </citation>
    <scope>NUCLEOTIDE SEQUENCE [LARGE SCALE GENOMIC DNA]</scope>
    <source>
        <strain>DSM 15139 / CIP 105565 / TT01</strain>
    </source>
</reference>
<name>METJ_PHOLL</name>
<proteinExistence type="inferred from homology"/>
<protein>
    <recommendedName>
        <fullName evidence="1">Met repressor</fullName>
    </recommendedName>
    <alternativeName>
        <fullName evidence="1">Met regulon regulatory protein MetJ</fullName>
    </alternativeName>
</protein>
<dbReference type="EMBL" id="BX571874">
    <property type="protein sequence ID" value="CAE17129.1"/>
    <property type="molecule type" value="Genomic_DNA"/>
</dbReference>
<dbReference type="RefSeq" id="WP_011148822.1">
    <property type="nucleotide sequence ID" value="NC_005126.1"/>
</dbReference>
<dbReference type="SMR" id="Q7MYC7"/>
<dbReference type="STRING" id="243265.plu4757"/>
<dbReference type="GeneID" id="45657807"/>
<dbReference type="GeneID" id="48850990"/>
<dbReference type="KEGG" id="plu:plu4757"/>
<dbReference type="eggNOG" id="COG3060">
    <property type="taxonomic scope" value="Bacteria"/>
</dbReference>
<dbReference type="HOGENOM" id="CLU_142318_0_0_6"/>
<dbReference type="OrthoDB" id="5680896at2"/>
<dbReference type="Proteomes" id="UP000002514">
    <property type="component" value="Chromosome"/>
</dbReference>
<dbReference type="GO" id="GO:0005737">
    <property type="term" value="C:cytoplasm"/>
    <property type="evidence" value="ECO:0007669"/>
    <property type="project" value="UniProtKB-SubCell"/>
</dbReference>
<dbReference type="GO" id="GO:0003677">
    <property type="term" value="F:DNA binding"/>
    <property type="evidence" value="ECO:0007669"/>
    <property type="project" value="UniProtKB-KW"/>
</dbReference>
<dbReference type="GO" id="GO:0003700">
    <property type="term" value="F:DNA-binding transcription factor activity"/>
    <property type="evidence" value="ECO:0007669"/>
    <property type="project" value="InterPro"/>
</dbReference>
<dbReference type="GO" id="GO:0009086">
    <property type="term" value="P:methionine biosynthetic process"/>
    <property type="evidence" value="ECO:0007669"/>
    <property type="project" value="UniProtKB-UniRule"/>
</dbReference>
<dbReference type="GO" id="GO:0045892">
    <property type="term" value="P:negative regulation of DNA-templated transcription"/>
    <property type="evidence" value="ECO:0007669"/>
    <property type="project" value="UniProtKB-UniRule"/>
</dbReference>
<dbReference type="CDD" id="cd00490">
    <property type="entry name" value="Met_repressor_MetJ"/>
    <property type="match status" value="1"/>
</dbReference>
<dbReference type="FunFam" id="1.10.140.10:FF:000001">
    <property type="entry name" value="Met repressor"/>
    <property type="match status" value="1"/>
</dbReference>
<dbReference type="Gene3D" id="1.10.140.10">
    <property type="entry name" value="MET Apo-Repressor, subunit A"/>
    <property type="match status" value="1"/>
</dbReference>
<dbReference type="HAMAP" id="MF_00744">
    <property type="entry name" value="MetJ"/>
    <property type="match status" value="1"/>
</dbReference>
<dbReference type="InterPro" id="IPR002084">
    <property type="entry name" value="Met_repressor_MetJ"/>
</dbReference>
<dbReference type="InterPro" id="IPR023453">
    <property type="entry name" value="Met_repressor_MetJ_dom_sf"/>
</dbReference>
<dbReference type="InterPro" id="IPR010985">
    <property type="entry name" value="Ribbon_hlx_hlx"/>
</dbReference>
<dbReference type="NCBIfam" id="NF003622">
    <property type="entry name" value="PRK05264.1"/>
    <property type="match status" value="1"/>
</dbReference>
<dbReference type="Pfam" id="PF01340">
    <property type="entry name" value="MetJ"/>
    <property type="match status" value="1"/>
</dbReference>
<dbReference type="SUPFAM" id="SSF47598">
    <property type="entry name" value="Ribbon-helix-helix"/>
    <property type="match status" value="1"/>
</dbReference>
<accession>Q7MYC7</accession>
<feature type="chain" id="PRO_0000198403" description="Met repressor">
    <location>
        <begin position="1"/>
        <end position="105"/>
    </location>
</feature>
<keyword id="KW-0028">Amino-acid biosynthesis</keyword>
<keyword id="KW-0963">Cytoplasm</keyword>
<keyword id="KW-0238">DNA-binding</keyword>
<keyword id="KW-0486">Methionine biosynthesis</keyword>
<keyword id="KW-1185">Reference proteome</keyword>
<keyword id="KW-0678">Repressor</keyword>
<keyword id="KW-0804">Transcription</keyword>
<keyword id="KW-0805">Transcription regulation</keyword>
<organism>
    <name type="scientific">Photorhabdus laumondii subsp. laumondii (strain DSM 15139 / CIP 105565 / TT01)</name>
    <name type="common">Photorhabdus luminescens subsp. laumondii</name>
    <dbReference type="NCBI Taxonomy" id="243265"/>
    <lineage>
        <taxon>Bacteria</taxon>
        <taxon>Pseudomonadati</taxon>
        <taxon>Pseudomonadota</taxon>
        <taxon>Gammaproteobacteria</taxon>
        <taxon>Enterobacterales</taxon>
        <taxon>Morganellaceae</taxon>
        <taxon>Photorhabdus</taxon>
    </lineage>
</organism>